<name>AL9A1_RAT</name>
<gene>
    <name type="primary">Aldh9a1</name>
</gene>
<keyword id="KW-0007">Acetylation</keyword>
<keyword id="KW-0963">Cytoplasm</keyword>
<keyword id="KW-0903">Direct protein sequencing</keyword>
<keyword id="KW-0520">NAD</keyword>
<keyword id="KW-0560">Oxidoreductase</keyword>
<keyword id="KW-1185">Reference proteome</keyword>
<reference key="1">
    <citation type="journal article" date="2000" name="J. Biol. Chem.">
        <title>Molecular and biochemical characterization of rat gamma-trimethylaminobutyraldehyde dehydrogenase and evidence for the involvement of human aldehyde dehydrogenase 9 in carnitine biosynthesis.</title>
        <authorList>
            <person name="Vaz F.M."/>
            <person name="Fouchier S.W."/>
            <person name="Ofman R."/>
            <person name="Sommer M."/>
            <person name="Wanders R.J.A."/>
        </authorList>
    </citation>
    <scope>NUCLEOTIDE SEQUENCE [MRNA]</scope>
    <scope>PARTIAL PROTEIN SEQUENCE</scope>
    <scope>FUNCTION</scope>
    <scope>CATALYTIC ACTIVITY</scope>
    <scope>PATHWAY</scope>
    <scope>BIOPHYSICOCHEMICAL PROPERTIES</scope>
    <scope>SUBCELLULAR LOCATION</scope>
    <scope>TISSUE SPECIFICITY</scope>
    <source>
        <strain>Wistar</strain>
        <tissue>Liver</tissue>
    </source>
</reference>
<reference key="2">
    <citation type="journal article" date="2004" name="Genome Res.">
        <title>The status, quality, and expansion of the NIH full-length cDNA project: the Mammalian Gene Collection (MGC).</title>
        <authorList>
            <consortium name="The MGC Project Team"/>
        </authorList>
    </citation>
    <scope>NUCLEOTIDE SEQUENCE [LARGE SCALE MRNA]</scope>
    <source>
        <tissue>Heart</tissue>
    </source>
</reference>
<reference key="3">
    <citation type="submission" date="2007-07" db="UniProtKB">
        <authorList>
            <person name="Lubec G."/>
            <person name="Afjehi-Sadat L."/>
            <person name="Kang S.U."/>
        </authorList>
    </citation>
    <scope>PROTEIN SEQUENCE OF 50-59; 199-223; 275-293 AND 412-426</scope>
    <scope>IDENTIFICATION BY MASS SPECTROMETRY</scope>
    <source>
        <strain>Sprague-Dawley</strain>
        <tissue>Brain</tissue>
        <tissue>Spinal cord</tissue>
    </source>
</reference>
<reference key="4">
    <citation type="journal article" date="1991" name="Comp. Biochem. Physiol.">
        <title>Aldehyde dehydrogenase (EC 1.2.1.3): comparison of subcellular localization of the third isozyme that dehydrogenates gamma-aminobutyraldehyde in rat, guinea pig and human liver.</title>
        <authorList>
            <person name="Ambroziak W."/>
            <person name="Kurys G."/>
            <person name="Pietruszko R."/>
        </authorList>
    </citation>
    <scope>FUNCTION</scope>
    <scope>CATALYTIC ACTIVITY</scope>
    <scope>SUBCELLULAR LOCATION</scope>
    <scope>BIOPHYSICOCHEMICAL PROPERTIES</scope>
</reference>
<feature type="initiator methionine" description="Removed" evidence="1">
    <location>
        <position position="1"/>
    </location>
</feature>
<feature type="chain" id="PRO_0000056489" description="4-trimethylaminobutyraldehyde dehydrogenase">
    <location>
        <begin position="2"/>
        <end position="494"/>
    </location>
</feature>
<feature type="active site" description="Proton acceptor" evidence="4">
    <location>
        <position position="254"/>
    </location>
</feature>
<feature type="active site" description="Nucleophile" evidence="5">
    <location>
        <position position="288"/>
    </location>
</feature>
<feature type="binding site" evidence="2">
    <location>
        <position position="180"/>
    </location>
    <ligand>
        <name>NAD(+)</name>
        <dbReference type="ChEBI" id="CHEBI:57540"/>
    </ligand>
</feature>
<feature type="binding site" evidence="2">
    <location>
        <begin position="232"/>
        <end position="236"/>
    </location>
    <ligand>
        <name>NAD(+)</name>
        <dbReference type="ChEBI" id="CHEBI:57540"/>
    </ligand>
</feature>
<feature type="binding site" evidence="2">
    <location>
        <position position="391"/>
    </location>
    <ligand>
        <name>NAD(+)</name>
        <dbReference type="ChEBI" id="CHEBI:57540"/>
    </ligand>
</feature>
<feature type="modified residue" description="N-acetylserine" evidence="1">
    <location>
        <position position="2"/>
    </location>
</feature>
<feature type="modified residue" description="N6-acetyllysine; alternate" evidence="3">
    <location>
        <position position="30"/>
    </location>
</feature>
<feature type="modified residue" description="N6-succinyllysine; alternate" evidence="3">
    <location>
        <position position="30"/>
    </location>
</feature>
<feature type="modified residue" description="N6-succinyllysine" evidence="3">
    <location>
        <position position="59"/>
    </location>
</feature>
<feature type="modified residue" description="N6-acetyllysine" evidence="1">
    <location>
        <position position="298"/>
    </location>
</feature>
<feature type="sequence conflict" description="In Ref. 2; AAH74019." evidence="9" ref="2">
    <original>AF</original>
    <variation>PFENQ</variation>
    <location>
        <begin position="493"/>
        <end position="494"/>
    </location>
</feature>
<dbReference type="EC" id="1.2.1.47" evidence="6"/>
<dbReference type="EC" id="1.2.1.3" evidence="6 7"/>
<dbReference type="EC" id="1.2.1.46" evidence="1"/>
<dbReference type="EC" id="1.2.1.19" evidence="6 7"/>
<dbReference type="EMBL" id="AF170918">
    <property type="protein sequence ID" value="AAF43598.1"/>
    <property type="molecule type" value="mRNA"/>
</dbReference>
<dbReference type="EMBL" id="BC074019">
    <property type="protein sequence ID" value="AAH74019.1"/>
    <property type="molecule type" value="mRNA"/>
</dbReference>
<dbReference type="RefSeq" id="NP_071609.2">
    <property type="nucleotide sequence ID" value="NM_022273.2"/>
</dbReference>
<dbReference type="SMR" id="Q9JLJ3"/>
<dbReference type="BioGRID" id="248957">
    <property type="interactions" value="1"/>
</dbReference>
<dbReference type="FunCoup" id="Q9JLJ3">
    <property type="interactions" value="993"/>
</dbReference>
<dbReference type="IntAct" id="Q9JLJ3">
    <property type="interactions" value="1"/>
</dbReference>
<dbReference type="STRING" id="10116.ENSRNOP00000005611"/>
<dbReference type="GlyGen" id="Q9JLJ3">
    <property type="glycosylation" value="1 site"/>
</dbReference>
<dbReference type="iPTMnet" id="Q9JLJ3"/>
<dbReference type="PhosphoSitePlus" id="Q9JLJ3"/>
<dbReference type="SwissPalm" id="Q9JLJ3"/>
<dbReference type="jPOST" id="Q9JLJ3"/>
<dbReference type="PaxDb" id="10116-ENSRNOP00000005611"/>
<dbReference type="PeptideAtlas" id="Q9JLJ3"/>
<dbReference type="GeneID" id="64040"/>
<dbReference type="KEGG" id="rno:64040"/>
<dbReference type="UCSC" id="RGD:68409">
    <property type="organism name" value="rat"/>
</dbReference>
<dbReference type="AGR" id="RGD:68409"/>
<dbReference type="CTD" id="223"/>
<dbReference type="RGD" id="68409">
    <property type="gene designation" value="Aldh9a1"/>
</dbReference>
<dbReference type="eggNOG" id="KOG2450">
    <property type="taxonomic scope" value="Eukaryota"/>
</dbReference>
<dbReference type="InParanoid" id="Q9JLJ3"/>
<dbReference type="OrthoDB" id="6811at9989"/>
<dbReference type="PhylomeDB" id="Q9JLJ3"/>
<dbReference type="BioCyc" id="MetaCyc:MONOMER-14430"/>
<dbReference type="BRENDA" id="1.2.1.47">
    <property type="organism ID" value="5301"/>
</dbReference>
<dbReference type="Reactome" id="R-RNO-71262">
    <property type="pathway name" value="Carnitine synthesis"/>
</dbReference>
<dbReference type="SABIO-RK" id="Q9JLJ3"/>
<dbReference type="UniPathway" id="UPA00118"/>
<dbReference type="PRO" id="PR:Q9JLJ3"/>
<dbReference type="Proteomes" id="UP000002494">
    <property type="component" value="Unplaced"/>
</dbReference>
<dbReference type="GO" id="GO:0005737">
    <property type="term" value="C:cytoplasm"/>
    <property type="evidence" value="ECO:0000314"/>
    <property type="project" value="UniProtKB"/>
</dbReference>
<dbReference type="GO" id="GO:0005829">
    <property type="term" value="C:cytosol"/>
    <property type="evidence" value="ECO:0000266"/>
    <property type="project" value="RGD"/>
</dbReference>
<dbReference type="GO" id="GO:0047105">
    <property type="term" value="F:4-trimethylammoniobutyraldehyde dehydrogenase activity"/>
    <property type="evidence" value="ECO:0000314"/>
    <property type="project" value="RGD"/>
</dbReference>
<dbReference type="GO" id="GO:0140087">
    <property type="term" value="F:acetaldehyde dehydrogenase (NAD+) activity"/>
    <property type="evidence" value="ECO:0007669"/>
    <property type="project" value="RHEA"/>
</dbReference>
<dbReference type="GO" id="GO:0004029">
    <property type="term" value="F:aldehyde dehydrogenase (NAD+) activity"/>
    <property type="evidence" value="ECO:0000314"/>
    <property type="project" value="UniProtKB"/>
</dbReference>
<dbReference type="GO" id="GO:0043176">
    <property type="term" value="F:amine binding"/>
    <property type="evidence" value="ECO:0000314"/>
    <property type="project" value="RGD"/>
</dbReference>
<dbReference type="GO" id="GO:0019145">
    <property type="term" value="F:aminobutyraldehyde dehydrogenase (NAD+) activity"/>
    <property type="evidence" value="ECO:0000314"/>
    <property type="project" value="UniProtKB"/>
</dbReference>
<dbReference type="GO" id="GO:0018467">
    <property type="term" value="F:formaldehyde dehydrogenase (NAD+) activity"/>
    <property type="evidence" value="ECO:0000250"/>
    <property type="project" value="UniProtKB"/>
</dbReference>
<dbReference type="GO" id="GO:0042802">
    <property type="term" value="F:identical protein binding"/>
    <property type="evidence" value="ECO:0000353"/>
    <property type="project" value="RGD"/>
</dbReference>
<dbReference type="GO" id="GO:0051287">
    <property type="term" value="F:NAD binding"/>
    <property type="evidence" value="ECO:0000314"/>
    <property type="project" value="RGD"/>
</dbReference>
<dbReference type="GO" id="GO:0016620">
    <property type="term" value="F:oxidoreductase activity, acting on the aldehyde or oxo group of donors, NAD or NADP as acceptor"/>
    <property type="evidence" value="ECO:0000266"/>
    <property type="project" value="RGD"/>
</dbReference>
<dbReference type="GO" id="GO:0036094">
    <property type="term" value="F:small molecule binding"/>
    <property type="evidence" value="ECO:0000266"/>
    <property type="project" value="RGD"/>
</dbReference>
<dbReference type="GO" id="GO:0006081">
    <property type="term" value="P:aldehyde metabolic process"/>
    <property type="evidence" value="ECO:0000250"/>
    <property type="project" value="UniProtKB"/>
</dbReference>
<dbReference type="GO" id="GO:0045329">
    <property type="term" value="P:carnitine biosynthetic process"/>
    <property type="evidence" value="ECO:0000266"/>
    <property type="project" value="RGD"/>
</dbReference>
<dbReference type="GO" id="GO:0009437">
    <property type="term" value="P:carnitine metabolic process"/>
    <property type="evidence" value="ECO:0000266"/>
    <property type="project" value="RGD"/>
</dbReference>
<dbReference type="GO" id="GO:0001822">
    <property type="term" value="P:kidney development"/>
    <property type="evidence" value="ECO:0000270"/>
    <property type="project" value="RGD"/>
</dbReference>
<dbReference type="GO" id="GO:0001889">
    <property type="term" value="P:liver development"/>
    <property type="evidence" value="ECO:0000270"/>
    <property type="project" value="RGD"/>
</dbReference>
<dbReference type="GO" id="GO:0051289">
    <property type="term" value="P:protein homotetramerization"/>
    <property type="evidence" value="ECO:0000250"/>
    <property type="project" value="UniProtKB"/>
</dbReference>
<dbReference type="CDD" id="cd07090">
    <property type="entry name" value="ALDH_F9_TMBADH"/>
    <property type="match status" value="1"/>
</dbReference>
<dbReference type="FunFam" id="3.40.309.10:FF:000019">
    <property type="entry name" value="4-trimethylaminobutyraldehyde dehydrogenase isoform X1"/>
    <property type="match status" value="1"/>
</dbReference>
<dbReference type="FunFam" id="3.40.605.10:FF:000016">
    <property type="entry name" value="4-trimethylaminobutyraldehyde dehydrogenase isoform X1"/>
    <property type="match status" value="1"/>
</dbReference>
<dbReference type="Gene3D" id="3.40.605.10">
    <property type="entry name" value="Aldehyde Dehydrogenase, Chain A, domain 1"/>
    <property type="match status" value="1"/>
</dbReference>
<dbReference type="Gene3D" id="3.40.309.10">
    <property type="entry name" value="Aldehyde Dehydrogenase, Chain A, domain 2"/>
    <property type="match status" value="1"/>
</dbReference>
<dbReference type="InterPro" id="IPR016161">
    <property type="entry name" value="Ald_DH/histidinol_DH"/>
</dbReference>
<dbReference type="InterPro" id="IPR016163">
    <property type="entry name" value="Ald_DH_C"/>
</dbReference>
<dbReference type="InterPro" id="IPR016160">
    <property type="entry name" value="Ald_DH_CS_CYS"/>
</dbReference>
<dbReference type="InterPro" id="IPR029510">
    <property type="entry name" value="Ald_DH_CS_GLU"/>
</dbReference>
<dbReference type="InterPro" id="IPR016162">
    <property type="entry name" value="Ald_DH_N"/>
</dbReference>
<dbReference type="InterPro" id="IPR015590">
    <property type="entry name" value="Aldehyde_DH_dom"/>
</dbReference>
<dbReference type="NCBIfam" id="NF009725">
    <property type="entry name" value="PRK13252.1"/>
    <property type="match status" value="1"/>
</dbReference>
<dbReference type="PANTHER" id="PTHR11699">
    <property type="entry name" value="ALDEHYDE DEHYDROGENASE-RELATED"/>
    <property type="match status" value="1"/>
</dbReference>
<dbReference type="Pfam" id="PF00171">
    <property type="entry name" value="Aldedh"/>
    <property type="match status" value="1"/>
</dbReference>
<dbReference type="SUPFAM" id="SSF53720">
    <property type="entry name" value="ALDH-like"/>
    <property type="match status" value="1"/>
</dbReference>
<dbReference type="PROSITE" id="PS00070">
    <property type="entry name" value="ALDEHYDE_DEHYDR_CYS"/>
    <property type="match status" value="1"/>
</dbReference>
<dbReference type="PROSITE" id="PS00687">
    <property type="entry name" value="ALDEHYDE_DEHYDR_GLU"/>
    <property type="match status" value="1"/>
</dbReference>
<protein>
    <recommendedName>
        <fullName>4-trimethylaminobutyraldehyde dehydrogenase</fullName>
        <shortName evidence="8">TMABA-DH</shortName>
        <shortName>TMABADH</shortName>
        <ecNumber evidence="6">1.2.1.47</ecNumber>
    </recommendedName>
    <alternativeName>
        <fullName>Aldehyde dehydrogenase family 9 member A1</fullName>
        <ecNumber evidence="6 7">1.2.1.3</ecNumber>
    </alternativeName>
    <alternativeName>
        <fullName>Formaldehyde dehydrogenase</fullName>
        <ecNumber evidence="1">1.2.1.46</ecNumber>
    </alternativeName>
    <alternativeName>
        <fullName evidence="8">Gamma-aminobutyraldehyde dehydrogenase</fullName>
        <ecNumber evidence="6 7">1.2.1.19</ecNumber>
    </alternativeName>
</protein>
<organism>
    <name type="scientific">Rattus norvegicus</name>
    <name type="common">Rat</name>
    <dbReference type="NCBI Taxonomy" id="10116"/>
    <lineage>
        <taxon>Eukaryota</taxon>
        <taxon>Metazoa</taxon>
        <taxon>Chordata</taxon>
        <taxon>Craniata</taxon>
        <taxon>Vertebrata</taxon>
        <taxon>Euteleostomi</taxon>
        <taxon>Mammalia</taxon>
        <taxon>Eutheria</taxon>
        <taxon>Euarchontoglires</taxon>
        <taxon>Glires</taxon>
        <taxon>Rodentia</taxon>
        <taxon>Myomorpha</taxon>
        <taxon>Muroidea</taxon>
        <taxon>Muridae</taxon>
        <taxon>Murinae</taxon>
        <taxon>Rattus</taxon>
    </lineage>
</organism>
<accession>Q9JLJ3</accession>
<accession>Q6GMM4</accession>
<proteinExistence type="evidence at protein level"/>
<sequence>MSTGTFVVSQPLNYRGGARVEPVDASGTEKAFEPATGREIATFKCSGEKEVNLAVENAKAAFKIWSKKSGLERCQVLLEAARIIKERRDEIAIMETINNGKSIFEARLDVDTSWQCLEYYAGLAASMAGEHIQLPGGSFGYTRREPLGVCLGIGAWNYPFQIACWKSAPALACGNAMIFKPSPFTPVSALLLAEIYTKAGAPNGLFNVVQGGAATGQFLCQHRDVAKVSFTGSVPTGMKIMEMAAKGIKPITLELGGKSPLIIFSDCNMKNAVKGALLANFLTQGQVCCNGTRVFVQKEIADAFTKEVVRQTQRIKIGDPLLEDTRMGPLINAPHLERVLGFVRSAKEQGATVLCGGEPYAPEDPKLKHGYYMTPCILTNCTDDMTCVKEEIFGPVMSILTFETEAEVLERANDTTFGLAAGVFTRDIQRAHRVAAELQAGTCYINNYNVSPVELPFGGYKKSGFGRENGRVTIEYYSQLKTVCVEMGDVESAF</sequence>
<evidence type="ECO:0000250" key="1">
    <source>
        <dbReference type="UniProtKB" id="P49189"/>
    </source>
</evidence>
<evidence type="ECO:0000250" key="2">
    <source>
        <dbReference type="UniProtKB" id="P56533"/>
    </source>
</evidence>
<evidence type="ECO:0000250" key="3">
    <source>
        <dbReference type="UniProtKB" id="Q9JLJ2"/>
    </source>
</evidence>
<evidence type="ECO:0000255" key="4">
    <source>
        <dbReference type="PROSITE-ProRule" id="PRU10007"/>
    </source>
</evidence>
<evidence type="ECO:0000255" key="5">
    <source>
        <dbReference type="PROSITE-ProRule" id="PRU10008"/>
    </source>
</evidence>
<evidence type="ECO:0000269" key="6">
    <source>
    </source>
</evidence>
<evidence type="ECO:0000269" key="7">
    <source>
    </source>
</evidence>
<evidence type="ECO:0000303" key="8">
    <source>
    </source>
</evidence>
<evidence type="ECO:0000305" key="9"/>
<evidence type="ECO:0000305" key="10">
    <source>
    </source>
</evidence>
<comment type="function">
    <text evidence="6 7">Converts gamma-trimethylaminobutyraldehyde into gamma-butyrobetaine with high efficiency (in vitro). Can catalyze the irreversible oxidation of a broad range of aldehydes to the corresponding acids in an NAD-dependent reaction, but with low efficiency. Catalyzes the oxidation of aldehydes arising from biogenic amines and polyamines.</text>
</comment>
<comment type="catalytic activity">
    <reaction evidence="6">
        <text>4-(trimethylamino)butanal + NAD(+) + H2O = 4-(trimethylamino)butanoate + NADH + 2 H(+)</text>
        <dbReference type="Rhea" id="RHEA:17985"/>
        <dbReference type="ChEBI" id="CHEBI:15377"/>
        <dbReference type="ChEBI" id="CHEBI:15378"/>
        <dbReference type="ChEBI" id="CHEBI:16244"/>
        <dbReference type="ChEBI" id="CHEBI:18020"/>
        <dbReference type="ChEBI" id="CHEBI:57540"/>
        <dbReference type="ChEBI" id="CHEBI:57945"/>
        <dbReference type="EC" id="1.2.1.47"/>
    </reaction>
</comment>
<comment type="catalytic activity">
    <reaction evidence="6 7">
        <text>an aldehyde + NAD(+) + H2O = a carboxylate + NADH + 2 H(+)</text>
        <dbReference type="Rhea" id="RHEA:16185"/>
        <dbReference type="ChEBI" id="CHEBI:15377"/>
        <dbReference type="ChEBI" id="CHEBI:15378"/>
        <dbReference type="ChEBI" id="CHEBI:17478"/>
        <dbReference type="ChEBI" id="CHEBI:29067"/>
        <dbReference type="ChEBI" id="CHEBI:57540"/>
        <dbReference type="ChEBI" id="CHEBI:57945"/>
        <dbReference type="EC" id="1.2.1.3"/>
    </reaction>
</comment>
<comment type="catalytic activity">
    <reaction evidence="6 7">
        <text>4-aminobutanal + NAD(+) + H2O = 4-aminobutanoate + NADH + 2 H(+)</text>
        <dbReference type="Rhea" id="RHEA:19105"/>
        <dbReference type="ChEBI" id="CHEBI:15377"/>
        <dbReference type="ChEBI" id="CHEBI:15378"/>
        <dbReference type="ChEBI" id="CHEBI:57540"/>
        <dbReference type="ChEBI" id="CHEBI:57945"/>
        <dbReference type="ChEBI" id="CHEBI:58264"/>
        <dbReference type="ChEBI" id="CHEBI:59888"/>
        <dbReference type="EC" id="1.2.1.19"/>
    </reaction>
</comment>
<comment type="catalytic activity">
    <reaction evidence="1">
        <text>formaldehyde + NAD(+) + H2O = formate + NADH + 2 H(+)</text>
        <dbReference type="Rhea" id="RHEA:16425"/>
        <dbReference type="ChEBI" id="CHEBI:15377"/>
        <dbReference type="ChEBI" id="CHEBI:15378"/>
        <dbReference type="ChEBI" id="CHEBI:15740"/>
        <dbReference type="ChEBI" id="CHEBI:16842"/>
        <dbReference type="ChEBI" id="CHEBI:57540"/>
        <dbReference type="ChEBI" id="CHEBI:57945"/>
        <dbReference type="EC" id="1.2.1.46"/>
    </reaction>
</comment>
<comment type="catalytic activity">
    <reaction evidence="1">
        <text>acetaldehyde + NAD(+) + H2O = acetate + NADH + 2 H(+)</text>
        <dbReference type="Rhea" id="RHEA:25294"/>
        <dbReference type="ChEBI" id="CHEBI:15343"/>
        <dbReference type="ChEBI" id="CHEBI:15377"/>
        <dbReference type="ChEBI" id="CHEBI:15378"/>
        <dbReference type="ChEBI" id="CHEBI:30089"/>
        <dbReference type="ChEBI" id="CHEBI:57540"/>
        <dbReference type="ChEBI" id="CHEBI:57945"/>
        <dbReference type="EC" id="1.2.1.3"/>
    </reaction>
</comment>
<comment type="catalytic activity">
    <reaction evidence="1">
        <text>imidazole-4-acetaldehyde + NAD(+) + H2O = imidazole-4-acetate + NADH + 2 H(+)</text>
        <dbReference type="Rhea" id="RHEA:31059"/>
        <dbReference type="ChEBI" id="CHEBI:15377"/>
        <dbReference type="ChEBI" id="CHEBI:15378"/>
        <dbReference type="ChEBI" id="CHEBI:27398"/>
        <dbReference type="ChEBI" id="CHEBI:57540"/>
        <dbReference type="ChEBI" id="CHEBI:57945"/>
        <dbReference type="ChEBI" id="CHEBI:57969"/>
    </reaction>
</comment>
<comment type="catalytic activity">
    <reaction evidence="1">
        <text>acrolein + NAD(+) + H2O = acrylate + NADH + 2 H(+)</text>
        <dbReference type="Rhea" id="RHEA:69084"/>
        <dbReference type="ChEBI" id="CHEBI:15368"/>
        <dbReference type="ChEBI" id="CHEBI:15377"/>
        <dbReference type="ChEBI" id="CHEBI:15378"/>
        <dbReference type="ChEBI" id="CHEBI:37080"/>
        <dbReference type="ChEBI" id="CHEBI:57540"/>
        <dbReference type="ChEBI" id="CHEBI:57945"/>
    </reaction>
</comment>
<comment type="catalytic activity">
    <reaction evidence="1">
        <text>(5-hydroxyindol-3-yl)acetaldehyde + NAD(+) + H2O = (5-hydroxyindol-3-yl)acetate + NADH + 2 H(+)</text>
        <dbReference type="Rhea" id="RHEA:31215"/>
        <dbReference type="ChEBI" id="CHEBI:15377"/>
        <dbReference type="ChEBI" id="CHEBI:15378"/>
        <dbReference type="ChEBI" id="CHEBI:50157"/>
        <dbReference type="ChEBI" id="CHEBI:57540"/>
        <dbReference type="ChEBI" id="CHEBI:57945"/>
        <dbReference type="ChEBI" id="CHEBI:62622"/>
    </reaction>
</comment>
<comment type="catalytic activity">
    <reaction evidence="1">
        <text>3,4-dihydroxyphenylacetaldehyde + NAD(+) + H2O = 3,4-dihydroxyphenylacetate + NADH + 2 H(+)</text>
        <dbReference type="Rhea" id="RHEA:69080"/>
        <dbReference type="ChEBI" id="CHEBI:15377"/>
        <dbReference type="ChEBI" id="CHEBI:15378"/>
        <dbReference type="ChEBI" id="CHEBI:17612"/>
        <dbReference type="ChEBI" id="CHEBI:27978"/>
        <dbReference type="ChEBI" id="CHEBI:57540"/>
        <dbReference type="ChEBI" id="CHEBI:57945"/>
    </reaction>
</comment>
<comment type="catalytic activity">
    <reaction evidence="1">
        <text>spermine monoaldehyde + NAD(+) + H2O = N-(2-carboxyethyl)spermidine + NADH + 2 H(+)</text>
        <dbReference type="Rhea" id="RHEA:69168"/>
        <dbReference type="ChEBI" id="CHEBI:15377"/>
        <dbReference type="ChEBI" id="CHEBI:15378"/>
        <dbReference type="ChEBI" id="CHEBI:57540"/>
        <dbReference type="ChEBI" id="CHEBI:57945"/>
        <dbReference type="ChEBI" id="CHEBI:180903"/>
        <dbReference type="ChEBI" id="CHEBI:180913"/>
    </reaction>
</comment>
<comment type="catalytic activity">
    <reaction evidence="7">
        <text>propanal + NAD(+) + H2O = propanoate + NADH + 2 H(+)</text>
        <dbReference type="Rhea" id="RHEA:67256"/>
        <dbReference type="ChEBI" id="CHEBI:15377"/>
        <dbReference type="ChEBI" id="CHEBI:15378"/>
        <dbReference type="ChEBI" id="CHEBI:17153"/>
        <dbReference type="ChEBI" id="CHEBI:17272"/>
        <dbReference type="ChEBI" id="CHEBI:57540"/>
        <dbReference type="ChEBI" id="CHEBI:57945"/>
    </reaction>
</comment>
<comment type="catalytic activity">
    <reaction evidence="1">
        <text>butanal + NAD(+) + H2O = butanoate + NADH + 2 H(+)</text>
        <dbReference type="Rhea" id="RHEA:69088"/>
        <dbReference type="ChEBI" id="CHEBI:15377"/>
        <dbReference type="ChEBI" id="CHEBI:15378"/>
        <dbReference type="ChEBI" id="CHEBI:15743"/>
        <dbReference type="ChEBI" id="CHEBI:17968"/>
        <dbReference type="ChEBI" id="CHEBI:57540"/>
        <dbReference type="ChEBI" id="CHEBI:57945"/>
    </reaction>
</comment>
<comment type="catalytic activity">
    <reaction evidence="1">
        <text>pentanal + NAD(+) + H2O = pentanoate + NADH + 2 H(+)</text>
        <dbReference type="Rhea" id="RHEA:69092"/>
        <dbReference type="ChEBI" id="CHEBI:15377"/>
        <dbReference type="ChEBI" id="CHEBI:15378"/>
        <dbReference type="ChEBI" id="CHEBI:31011"/>
        <dbReference type="ChEBI" id="CHEBI:57540"/>
        <dbReference type="ChEBI" id="CHEBI:57945"/>
        <dbReference type="ChEBI" id="CHEBI:84069"/>
    </reaction>
</comment>
<comment type="catalytic activity">
    <reaction evidence="1">
        <text>hexanal + NAD(+) + H2O = hexanoate + NADH + 2 H(+)</text>
        <dbReference type="Rhea" id="RHEA:67276"/>
        <dbReference type="ChEBI" id="CHEBI:15377"/>
        <dbReference type="ChEBI" id="CHEBI:15378"/>
        <dbReference type="ChEBI" id="CHEBI:17120"/>
        <dbReference type="ChEBI" id="CHEBI:57540"/>
        <dbReference type="ChEBI" id="CHEBI:57945"/>
        <dbReference type="ChEBI" id="CHEBI:88528"/>
    </reaction>
</comment>
<comment type="biophysicochemical properties">
    <kinetics>
        <KM evidence="6">28 uM for NAD</KM>
        <KM evidence="7">4 uM for NAD</KM>
        <KM evidence="6">1630 uM for NADP</KM>
        <KM evidence="6">1.4 uM for gamma-trimethylaminobutyraldehyde</KM>
        <KM evidence="6">24 uM for 4-aminobutyraldehyde</KM>
        <KM evidence="7">5 uM for 4-aminobutyraldehyde</KM>
        <KM evidence="6">7 uM for heptanal</KM>
        <KM evidence="6">6 uM for octanal</KM>
        <KM evidence="7">7.5 uM for propanal</KM>
    </kinetics>
</comment>
<comment type="pathway">
    <text evidence="10">Amine and polyamine biosynthesis; carnitine biosynthesis.</text>
</comment>
<comment type="subunit">
    <text evidence="1">Homotetramer.</text>
</comment>
<comment type="subcellular location">
    <subcellularLocation>
        <location evidence="6">Cytoplasm</location>
        <location evidence="6">Cytosol</location>
    </subcellularLocation>
    <subcellularLocation>
        <location evidence="7">Cytoplasm</location>
    </subcellularLocation>
</comment>
<comment type="tissue specificity">
    <text evidence="6">Detected in lever (at protein level).</text>
</comment>
<comment type="similarity">
    <text evidence="9">Belongs to the aldehyde dehydrogenase family.</text>
</comment>